<keyword id="KW-0328">Glycosyltransferase</keyword>
<keyword id="KW-1185">Reference proteome</keyword>
<keyword id="KW-0808">Transferase</keyword>
<name>PPNP_SHISS</name>
<dbReference type="EC" id="2.4.2.1" evidence="1"/>
<dbReference type="EC" id="2.4.2.2" evidence="1"/>
<dbReference type="EMBL" id="CP000038">
    <property type="protein sequence ID" value="AAZ87143.1"/>
    <property type="molecule type" value="Genomic_DNA"/>
</dbReference>
<dbReference type="RefSeq" id="WP_000941942.1">
    <property type="nucleotide sequence ID" value="NC_007384.1"/>
</dbReference>
<dbReference type="SMR" id="Q3Z519"/>
<dbReference type="GeneID" id="93777070"/>
<dbReference type="KEGG" id="ssn:SSON_0367"/>
<dbReference type="HOGENOM" id="CLU_157874_0_0_6"/>
<dbReference type="Proteomes" id="UP000002529">
    <property type="component" value="Chromosome"/>
</dbReference>
<dbReference type="GO" id="GO:0005829">
    <property type="term" value="C:cytosol"/>
    <property type="evidence" value="ECO:0007669"/>
    <property type="project" value="TreeGrafter"/>
</dbReference>
<dbReference type="GO" id="GO:0047975">
    <property type="term" value="F:guanosine phosphorylase activity"/>
    <property type="evidence" value="ECO:0007669"/>
    <property type="project" value="UniProtKB-EC"/>
</dbReference>
<dbReference type="GO" id="GO:0004731">
    <property type="term" value="F:purine-nucleoside phosphorylase activity"/>
    <property type="evidence" value="ECO:0007669"/>
    <property type="project" value="UniProtKB-UniRule"/>
</dbReference>
<dbReference type="GO" id="GO:0009032">
    <property type="term" value="F:thymidine phosphorylase activity"/>
    <property type="evidence" value="ECO:0007669"/>
    <property type="project" value="UniProtKB-EC"/>
</dbReference>
<dbReference type="GO" id="GO:0004850">
    <property type="term" value="F:uridine phosphorylase activity"/>
    <property type="evidence" value="ECO:0007669"/>
    <property type="project" value="UniProtKB-EC"/>
</dbReference>
<dbReference type="CDD" id="cd20296">
    <property type="entry name" value="cupin_PpnP-like"/>
    <property type="match status" value="1"/>
</dbReference>
<dbReference type="FunFam" id="2.60.120.10:FF:000016">
    <property type="entry name" value="Pyrimidine/purine nucleoside phosphorylase"/>
    <property type="match status" value="1"/>
</dbReference>
<dbReference type="Gene3D" id="2.60.120.10">
    <property type="entry name" value="Jelly Rolls"/>
    <property type="match status" value="1"/>
</dbReference>
<dbReference type="HAMAP" id="MF_01537">
    <property type="entry name" value="Nucleos_phosphorylase_PpnP"/>
    <property type="match status" value="1"/>
</dbReference>
<dbReference type="InterPro" id="IPR009664">
    <property type="entry name" value="Ppnp"/>
</dbReference>
<dbReference type="InterPro" id="IPR014710">
    <property type="entry name" value="RmlC-like_jellyroll"/>
</dbReference>
<dbReference type="InterPro" id="IPR011051">
    <property type="entry name" value="RmlC_Cupin_sf"/>
</dbReference>
<dbReference type="NCBIfam" id="NF007875">
    <property type="entry name" value="PRK10579.1"/>
    <property type="match status" value="1"/>
</dbReference>
<dbReference type="PANTHER" id="PTHR36540">
    <property type="entry name" value="PYRIMIDINE/PURINE NUCLEOSIDE PHOSPHORYLASE"/>
    <property type="match status" value="1"/>
</dbReference>
<dbReference type="PANTHER" id="PTHR36540:SF1">
    <property type="entry name" value="PYRIMIDINE_PURINE NUCLEOSIDE PHOSPHORYLASE"/>
    <property type="match status" value="1"/>
</dbReference>
<dbReference type="Pfam" id="PF06865">
    <property type="entry name" value="Ppnp"/>
    <property type="match status" value="1"/>
</dbReference>
<dbReference type="SUPFAM" id="SSF51182">
    <property type="entry name" value="RmlC-like cupins"/>
    <property type="match status" value="1"/>
</dbReference>
<gene>
    <name evidence="1" type="primary">ppnP</name>
    <name type="ordered locus">SSON_0367</name>
</gene>
<sequence length="94" mass="10234">MLQSNEYFSGKVKSIGFSSSSTGRASVGVMVEGEYTFSTAEPEEMTVISGALNVLLPDATDWQVYEAGSVFNVPGHSEFHLQVAEPTSYLCRYL</sequence>
<organism>
    <name type="scientific">Shigella sonnei (strain Ss046)</name>
    <dbReference type="NCBI Taxonomy" id="300269"/>
    <lineage>
        <taxon>Bacteria</taxon>
        <taxon>Pseudomonadati</taxon>
        <taxon>Pseudomonadota</taxon>
        <taxon>Gammaproteobacteria</taxon>
        <taxon>Enterobacterales</taxon>
        <taxon>Enterobacteriaceae</taxon>
        <taxon>Shigella</taxon>
    </lineage>
</organism>
<accession>Q3Z519</accession>
<feature type="chain" id="PRO_0000298732" description="Pyrimidine/purine nucleoside phosphorylase">
    <location>
        <begin position="1"/>
        <end position="94"/>
    </location>
</feature>
<reference key="1">
    <citation type="journal article" date="2005" name="Nucleic Acids Res.">
        <title>Genome dynamics and diversity of Shigella species, the etiologic agents of bacillary dysentery.</title>
        <authorList>
            <person name="Yang F."/>
            <person name="Yang J."/>
            <person name="Zhang X."/>
            <person name="Chen L."/>
            <person name="Jiang Y."/>
            <person name="Yan Y."/>
            <person name="Tang X."/>
            <person name="Wang J."/>
            <person name="Xiong Z."/>
            <person name="Dong J."/>
            <person name="Xue Y."/>
            <person name="Zhu Y."/>
            <person name="Xu X."/>
            <person name="Sun L."/>
            <person name="Chen S."/>
            <person name="Nie H."/>
            <person name="Peng J."/>
            <person name="Xu J."/>
            <person name="Wang Y."/>
            <person name="Yuan Z."/>
            <person name="Wen Y."/>
            <person name="Yao Z."/>
            <person name="Shen Y."/>
            <person name="Qiang B."/>
            <person name="Hou Y."/>
            <person name="Yu J."/>
            <person name="Jin Q."/>
        </authorList>
    </citation>
    <scope>NUCLEOTIDE SEQUENCE [LARGE SCALE GENOMIC DNA]</scope>
    <source>
        <strain>Ss046</strain>
    </source>
</reference>
<protein>
    <recommendedName>
        <fullName evidence="1">Pyrimidine/purine nucleoside phosphorylase</fullName>
        <ecNumber evidence="1">2.4.2.1</ecNumber>
        <ecNumber evidence="1">2.4.2.2</ecNumber>
    </recommendedName>
    <alternativeName>
        <fullName evidence="1">Adenosine phosphorylase</fullName>
    </alternativeName>
    <alternativeName>
        <fullName evidence="1">Cytidine phosphorylase</fullName>
    </alternativeName>
    <alternativeName>
        <fullName evidence="1">Guanosine phosphorylase</fullName>
    </alternativeName>
    <alternativeName>
        <fullName evidence="1">Inosine phosphorylase</fullName>
    </alternativeName>
    <alternativeName>
        <fullName evidence="1">Thymidine phosphorylase</fullName>
    </alternativeName>
    <alternativeName>
        <fullName evidence="1">Uridine phosphorylase</fullName>
    </alternativeName>
    <alternativeName>
        <fullName evidence="1">Xanthosine phosphorylase</fullName>
    </alternativeName>
</protein>
<comment type="function">
    <text evidence="1">Catalyzes the phosphorolysis of diverse nucleosides, yielding D-ribose 1-phosphate and the respective free bases. Can use uridine, adenosine, guanosine, cytidine, thymidine, inosine and xanthosine as substrates. Also catalyzes the reverse reactions.</text>
</comment>
<comment type="catalytic activity">
    <reaction evidence="1">
        <text>a purine D-ribonucleoside + phosphate = a purine nucleobase + alpha-D-ribose 1-phosphate</text>
        <dbReference type="Rhea" id="RHEA:19805"/>
        <dbReference type="ChEBI" id="CHEBI:26386"/>
        <dbReference type="ChEBI" id="CHEBI:43474"/>
        <dbReference type="ChEBI" id="CHEBI:57720"/>
        <dbReference type="ChEBI" id="CHEBI:142355"/>
        <dbReference type="EC" id="2.4.2.1"/>
    </reaction>
</comment>
<comment type="catalytic activity">
    <reaction evidence="1">
        <text>adenosine + phosphate = alpha-D-ribose 1-phosphate + adenine</text>
        <dbReference type="Rhea" id="RHEA:27642"/>
        <dbReference type="ChEBI" id="CHEBI:16335"/>
        <dbReference type="ChEBI" id="CHEBI:16708"/>
        <dbReference type="ChEBI" id="CHEBI:43474"/>
        <dbReference type="ChEBI" id="CHEBI:57720"/>
        <dbReference type="EC" id="2.4.2.1"/>
    </reaction>
</comment>
<comment type="catalytic activity">
    <reaction evidence="1">
        <text>cytidine + phosphate = cytosine + alpha-D-ribose 1-phosphate</text>
        <dbReference type="Rhea" id="RHEA:52540"/>
        <dbReference type="ChEBI" id="CHEBI:16040"/>
        <dbReference type="ChEBI" id="CHEBI:17562"/>
        <dbReference type="ChEBI" id="CHEBI:43474"/>
        <dbReference type="ChEBI" id="CHEBI:57720"/>
        <dbReference type="EC" id="2.4.2.2"/>
    </reaction>
</comment>
<comment type="catalytic activity">
    <reaction evidence="1">
        <text>guanosine + phosphate = alpha-D-ribose 1-phosphate + guanine</text>
        <dbReference type="Rhea" id="RHEA:13233"/>
        <dbReference type="ChEBI" id="CHEBI:16235"/>
        <dbReference type="ChEBI" id="CHEBI:16750"/>
        <dbReference type="ChEBI" id="CHEBI:43474"/>
        <dbReference type="ChEBI" id="CHEBI:57720"/>
        <dbReference type="EC" id="2.4.2.1"/>
    </reaction>
</comment>
<comment type="catalytic activity">
    <reaction evidence="1">
        <text>inosine + phosphate = alpha-D-ribose 1-phosphate + hypoxanthine</text>
        <dbReference type="Rhea" id="RHEA:27646"/>
        <dbReference type="ChEBI" id="CHEBI:17368"/>
        <dbReference type="ChEBI" id="CHEBI:17596"/>
        <dbReference type="ChEBI" id="CHEBI:43474"/>
        <dbReference type="ChEBI" id="CHEBI:57720"/>
        <dbReference type="EC" id="2.4.2.1"/>
    </reaction>
</comment>
<comment type="catalytic activity">
    <reaction evidence="1">
        <text>thymidine + phosphate = 2-deoxy-alpha-D-ribose 1-phosphate + thymine</text>
        <dbReference type="Rhea" id="RHEA:16037"/>
        <dbReference type="ChEBI" id="CHEBI:17748"/>
        <dbReference type="ChEBI" id="CHEBI:17821"/>
        <dbReference type="ChEBI" id="CHEBI:43474"/>
        <dbReference type="ChEBI" id="CHEBI:57259"/>
        <dbReference type="EC" id="2.4.2.2"/>
    </reaction>
</comment>
<comment type="catalytic activity">
    <reaction evidence="1">
        <text>uridine + phosphate = alpha-D-ribose 1-phosphate + uracil</text>
        <dbReference type="Rhea" id="RHEA:24388"/>
        <dbReference type="ChEBI" id="CHEBI:16704"/>
        <dbReference type="ChEBI" id="CHEBI:17568"/>
        <dbReference type="ChEBI" id="CHEBI:43474"/>
        <dbReference type="ChEBI" id="CHEBI:57720"/>
        <dbReference type="EC" id="2.4.2.2"/>
    </reaction>
</comment>
<comment type="catalytic activity">
    <reaction evidence="1">
        <text>xanthosine + phosphate = alpha-D-ribose 1-phosphate + xanthine</text>
        <dbReference type="Rhea" id="RHEA:27638"/>
        <dbReference type="ChEBI" id="CHEBI:17712"/>
        <dbReference type="ChEBI" id="CHEBI:18107"/>
        <dbReference type="ChEBI" id="CHEBI:43474"/>
        <dbReference type="ChEBI" id="CHEBI:57720"/>
        <dbReference type="EC" id="2.4.2.1"/>
    </reaction>
</comment>
<comment type="similarity">
    <text evidence="1">Belongs to the nucleoside phosphorylase PpnP family.</text>
</comment>
<proteinExistence type="inferred from homology"/>
<evidence type="ECO:0000255" key="1">
    <source>
        <dbReference type="HAMAP-Rule" id="MF_01537"/>
    </source>
</evidence>